<evidence type="ECO:0000250" key="1"/>
<evidence type="ECO:0000305" key="2"/>
<organism>
    <name type="scientific">Aquifex aeolicus (strain VF5)</name>
    <dbReference type="NCBI Taxonomy" id="224324"/>
    <lineage>
        <taxon>Bacteria</taxon>
        <taxon>Pseudomonadati</taxon>
        <taxon>Aquificota</taxon>
        <taxon>Aquificia</taxon>
        <taxon>Aquificales</taxon>
        <taxon>Aquificaceae</taxon>
        <taxon>Aquifex</taxon>
    </lineage>
</organism>
<reference key="1">
    <citation type="journal article" date="1998" name="Nature">
        <title>The complete genome of the hyperthermophilic bacterium Aquifex aeolicus.</title>
        <authorList>
            <person name="Deckert G."/>
            <person name="Warren P.V."/>
            <person name="Gaasterland T."/>
            <person name="Young W.G."/>
            <person name="Lenox A.L."/>
            <person name="Graham D.E."/>
            <person name="Overbeek R."/>
            <person name="Snead M.A."/>
            <person name="Keller M."/>
            <person name="Aujay M."/>
            <person name="Huber R."/>
            <person name="Feldman R.A."/>
            <person name="Short J.M."/>
            <person name="Olsen G.J."/>
            <person name="Swanson R.V."/>
        </authorList>
    </citation>
    <scope>NUCLEOTIDE SEQUENCE [LARGE SCALE GENOMIC DNA]</scope>
    <source>
        <strain>VF5</strain>
    </source>
</reference>
<reference key="2">
    <citation type="journal article" date="2008" name="Nature">
        <title>Structure of a complex of the ATPase SecA and the protein-translocation channel.</title>
        <authorList>
            <person name="Zimmer J."/>
            <person name="Nam Y."/>
            <person name="Rapoport T.A."/>
        </authorList>
    </citation>
    <scope>X-RAY CRYSTALLOGRAPHY (7.5 ANGSTROMS) OF SECYEG IN COMPLEX WITH B.SUBTILIS SECA</scope>
</reference>
<sequence length="429" mass="48100">MSEYLKALFELKELRQKFIFTLLMFVIYRLGSHIPIPGINPEALRDFLKAFEGSVFALYDIFSGGNLGRLTVFALGVMPYISASIMMQLLTVAIPSLQRLAKEEGDYGRYKINEYTKYLTLFVATVQSLGIAFWIRGQVSPKGIPVVENPGISFILITVLTLVAGTMFLVWIADRITEKGIGNGASLIIFAGIVANFPNAVIQFYEKVKTGDIGPLTLLLIIALIIAIIVGIVYVQEAERRIPIQYPGRQVGRQLYAGRKTYLPIKINPAGVIPIIFAQALLLIPSTLLNFVQNPFIKVIADMFQPGAIFYNFLYVTFIVFFTYFYTAVLINPVELAENLHKAGAFIPGVRPGQDTVKYLERIINRLIFFGALFLSVIALIPILISVWFNIPFYFGGTTALIVVGVALDTFRQIETYLIQKKYKSYVRR</sequence>
<dbReference type="EMBL" id="AE000657">
    <property type="protein sequence ID" value="AAC06435.1"/>
    <property type="molecule type" value="Genomic_DNA"/>
</dbReference>
<dbReference type="PIR" id="H70307">
    <property type="entry name" value="H70307"/>
</dbReference>
<dbReference type="RefSeq" id="NP_213051.1">
    <property type="nucleotide sequence ID" value="NC_000918.1"/>
</dbReference>
<dbReference type="RefSeq" id="WP_010879989.1">
    <property type="nucleotide sequence ID" value="NC_000918.1"/>
</dbReference>
<dbReference type="PDB" id="3DL8">
    <property type="method" value="X-ray"/>
    <property type="resolution" value="7.50 A"/>
    <property type="chains" value="G/H=1-429"/>
</dbReference>
<dbReference type="PDBsum" id="3DL8"/>
<dbReference type="SMR" id="O66491"/>
<dbReference type="DIP" id="DIP-59810N"/>
<dbReference type="FunCoup" id="O66491">
    <property type="interactions" value="389"/>
</dbReference>
<dbReference type="IntAct" id="O66491">
    <property type="interactions" value="2"/>
</dbReference>
<dbReference type="STRING" id="224324.aq_079"/>
<dbReference type="EnsemblBacteria" id="AAC06435">
    <property type="protein sequence ID" value="AAC06435"/>
    <property type="gene ID" value="aq_079"/>
</dbReference>
<dbReference type="KEGG" id="aae:aq_079"/>
<dbReference type="PATRIC" id="fig|224324.8.peg.69"/>
<dbReference type="eggNOG" id="COG0201">
    <property type="taxonomic scope" value="Bacteria"/>
</dbReference>
<dbReference type="HOGENOM" id="CLU_030313_0_2_0"/>
<dbReference type="InParanoid" id="O66491"/>
<dbReference type="OrthoDB" id="9809248at2"/>
<dbReference type="EvolutionaryTrace" id="O66491"/>
<dbReference type="Proteomes" id="UP000000798">
    <property type="component" value="Chromosome"/>
</dbReference>
<dbReference type="GO" id="GO:0031522">
    <property type="term" value="C:cell envelope Sec protein transport complex"/>
    <property type="evidence" value="ECO:0000318"/>
    <property type="project" value="GO_Central"/>
</dbReference>
<dbReference type="GO" id="GO:0005886">
    <property type="term" value="C:plasma membrane"/>
    <property type="evidence" value="ECO:0000318"/>
    <property type="project" value="GO_Central"/>
</dbReference>
<dbReference type="GO" id="GO:0008320">
    <property type="term" value="F:protein transmembrane transporter activity"/>
    <property type="evidence" value="ECO:0000318"/>
    <property type="project" value="GO_Central"/>
</dbReference>
<dbReference type="GO" id="GO:0005048">
    <property type="term" value="F:signal sequence binding"/>
    <property type="evidence" value="ECO:0000318"/>
    <property type="project" value="GO_Central"/>
</dbReference>
<dbReference type="GO" id="GO:0043952">
    <property type="term" value="P:protein transport by the Sec complex"/>
    <property type="evidence" value="ECO:0007669"/>
    <property type="project" value="UniProtKB-UniRule"/>
</dbReference>
<dbReference type="GO" id="GO:0006616">
    <property type="term" value="P:SRP-dependent cotranslational protein targeting to membrane, translocation"/>
    <property type="evidence" value="ECO:0000318"/>
    <property type="project" value="GO_Central"/>
</dbReference>
<dbReference type="FunFam" id="1.10.3370.10:FF:000001">
    <property type="entry name" value="Preprotein translocase subunit SecY"/>
    <property type="match status" value="1"/>
</dbReference>
<dbReference type="Gene3D" id="1.10.3370.10">
    <property type="entry name" value="SecY subunit domain"/>
    <property type="match status" value="1"/>
</dbReference>
<dbReference type="HAMAP" id="MF_01465">
    <property type="entry name" value="SecY"/>
    <property type="match status" value="1"/>
</dbReference>
<dbReference type="InterPro" id="IPR026593">
    <property type="entry name" value="SecY"/>
</dbReference>
<dbReference type="InterPro" id="IPR002208">
    <property type="entry name" value="SecY/SEC61-alpha"/>
</dbReference>
<dbReference type="InterPro" id="IPR030659">
    <property type="entry name" value="SecY_CS"/>
</dbReference>
<dbReference type="InterPro" id="IPR023201">
    <property type="entry name" value="SecY_dom_sf"/>
</dbReference>
<dbReference type="NCBIfam" id="TIGR00967">
    <property type="entry name" value="3a0501s007"/>
    <property type="match status" value="1"/>
</dbReference>
<dbReference type="PANTHER" id="PTHR10906">
    <property type="entry name" value="SECY/SEC61-ALPHA FAMILY MEMBER"/>
    <property type="match status" value="1"/>
</dbReference>
<dbReference type="Pfam" id="PF00344">
    <property type="entry name" value="SecY"/>
    <property type="match status" value="1"/>
</dbReference>
<dbReference type="PIRSF" id="PIRSF004557">
    <property type="entry name" value="SecY"/>
    <property type="match status" value="1"/>
</dbReference>
<dbReference type="PRINTS" id="PR00303">
    <property type="entry name" value="SECYTRNLCASE"/>
</dbReference>
<dbReference type="SUPFAM" id="SSF103491">
    <property type="entry name" value="Preprotein translocase SecY subunit"/>
    <property type="match status" value="1"/>
</dbReference>
<dbReference type="PROSITE" id="PS00755">
    <property type="entry name" value="SECY_1"/>
    <property type="match status" value="1"/>
</dbReference>
<dbReference type="PROSITE" id="PS00756">
    <property type="entry name" value="SECY_2"/>
    <property type="match status" value="1"/>
</dbReference>
<keyword id="KW-0002">3D-structure</keyword>
<keyword id="KW-0997">Cell inner membrane</keyword>
<keyword id="KW-1003">Cell membrane</keyword>
<keyword id="KW-0472">Membrane</keyword>
<keyword id="KW-0653">Protein transport</keyword>
<keyword id="KW-1185">Reference proteome</keyword>
<keyword id="KW-0811">Translocation</keyword>
<keyword id="KW-0812">Transmembrane</keyword>
<keyword id="KW-1133">Transmembrane helix</keyword>
<keyword id="KW-0813">Transport</keyword>
<feature type="chain" id="PRO_0000131707" description="Protein translocase subunit SecY">
    <location>
        <begin position="1"/>
        <end position="429"/>
    </location>
</feature>
<feature type="topological domain" description="Cytoplasmic">
    <location>
        <begin position="1"/>
        <end position="13"/>
    </location>
</feature>
<feature type="transmembrane region" description="Helical; Name=1">
    <location>
        <begin position="14"/>
        <end position="40"/>
    </location>
</feature>
<feature type="topological domain" description="Periplasmic">
    <location>
        <begin position="41"/>
        <end position="64"/>
    </location>
</feature>
<feature type="transmembrane region" description="Discontinuously helical; Name=Helix 2">
    <location>
        <begin position="65"/>
        <end position="98"/>
    </location>
</feature>
<feature type="intramembrane region" description="Helical; Name=Helix 2A">
    <location>
        <begin position="65"/>
        <end position="72"/>
    </location>
</feature>
<feature type="intramembrane region">
    <location>
        <begin position="73"/>
        <end position="77"/>
    </location>
</feature>
<feature type="intramembrane region" description="Helical; Name=Helix 2B">
    <location>
        <begin position="78"/>
        <end position="98"/>
    </location>
</feature>
<feature type="topological domain" description="Cytoplasmic">
    <location>
        <begin position="99"/>
        <end position="111"/>
    </location>
</feature>
<feature type="transmembrane region" description="Helical; Name=3">
    <location>
        <begin position="112"/>
        <end position="132"/>
    </location>
</feature>
<feature type="topological domain" description="Periplasmic">
    <location>
        <begin position="133"/>
        <end position="154"/>
    </location>
</feature>
<feature type="transmembrane region" description="Helical; Name=4">
    <location>
        <begin position="155"/>
        <end position="178"/>
    </location>
</feature>
<feature type="topological domain" description="Cytoplasmic">
    <location>
        <begin position="179"/>
        <end position="181"/>
    </location>
</feature>
<feature type="transmembrane region" description="Helical; Name=5">
    <location>
        <begin position="182"/>
        <end position="200"/>
    </location>
</feature>
<feature type="topological domain" description="Periplasmic">
    <location>
        <begin position="201"/>
        <end position="214"/>
    </location>
</feature>
<feature type="transmembrane region" description="Helical; Name=6">
    <location>
        <begin position="215"/>
        <end position="235"/>
    </location>
</feature>
<feature type="topological domain" description="Cytoplasmic">
    <location>
        <begin position="236"/>
        <end position="267"/>
    </location>
</feature>
<feature type="transmembrane region" description="Helical; Name=7">
    <location>
        <begin position="268"/>
        <end position="286"/>
    </location>
</feature>
<feature type="topological domain" description="Periplasmic">
    <location>
        <begin position="287"/>
        <end position="307"/>
    </location>
</feature>
<feature type="transmembrane region" description="Helical; Name=8">
    <location>
        <begin position="308"/>
        <end position="329"/>
    </location>
</feature>
<feature type="topological domain" description="Cytoplasmic">
    <location>
        <begin position="330"/>
        <end position="360"/>
    </location>
</feature>
<feature type="transmembrane region" description="Helical; Name=9">
    <location>
        <begin position="361"/>
        <end position="385"/>
    </location>
</feature>
<feature type="topological domain" description="Periplasmic">
    <location>
        <begin position="386"/>
        <end position="393"/>
    </location>
</feature>
<feature type="transmembrane region" description="Helical; Name=10">
    <location>
        <begin position="394"/>
        <end position="414"/>
    </location>
</feature>
<feature type="topological domain" description="Cytoplasmic">
    <location>
        <begin position="415"/>
        <end position="429"/>
    </location>
</feature>
<gene>
    <name type="primary">secY</name>
    <name type="ordered locus">aq_079</name>
</gene>
<name>SECY_AQUAE</name>
<accession>O66491</accession>
<protein>
    <recommendedName>
        <fullName>Protein translocase subunit SecY</fullName>
    </recommendedName>
</protein>
<comment type="function">
    <text evidence="1">The central subunit of the protein translocation channel SecYEG. Consists of two halves formed by TMs 1-5 and 6-10. These two domains form a lateral gate at the front which open onto the bilayer between TMs 2 and 7, and are clamped together by SecE at the back. The channel is closed by both a pore ring composed of hydrophobic SecY resides and a short helix (helix 2A) on the extracellular side of the membrane which forms a plug. The plug probably moves laterally to allow the channel to open. The ring and the pore may move independently (By similarity).</text>
</comment>
<comment type="subunit">
    <text evidence="1">Component of the Sec protein translocase complex. Heterotrimer consisting of SecY, SecE and SecG subunits. The heterotrimers can form oligomers, although 1 heterotrimer is thought to be able to translocate proteins. Interacts with the ribosome. Interacts with SecDF, and other proteins may be involved. Interacts with SecA (By similarity).</text>
</comment>
<comment type="subcellular location">
    <subcellularLocation>
        <location evidence="1">Cell inner membrane</location>
        <topology evidence="1">Multi-pass membrane protein</topology>
    </subcellularLocation>
</comment>
<comment type="similarity">
    <text evidence="2">Belongs to the SecY/SEC61-alpha family.</text>
</comment>
<proteinExistence type="evidence at protein level"/>